<comment type="function">
    <text evidence="1">Part of the multicomponent 3-phenylpropionate dioxygenase. Converts 3-phenylpropionic acid (PP) and cinnamic acid (CI) into 3-phenylpropionate-dihydrodiol (PP-dihydrodiol) and cinnamic acid-dihydrodiol (CI-dihydrodiol), respectively.</text>
</comment>
<comment type="catalytic activity">
    <reaction evidence="1">
        <text>3-phenylpropanoate + NADH + O2 + H(+) = 3-(cis-5,6-dihydroxycyclohexa-1,3-dien-1-yl)propanoate + NAD(+)</text>
        <dbReference type="Rhea" id="RHEA:20357"/>
        <dbReference type="ChEBI" id="CHEBI:15378"/>
        <dbReference type="ChEBI" id="CHEBI:15379"/>
        <dbReference type="ChEBI" id="CHEBI:51057"/>
        <dbReference type="ChEBI" id="CHEBI:57540"/>
        <dbReference type="ChEBI" id="CHEBI:57945"/>
        <dbReference type="ChEBI" id="CHEBI:60087"/>
        <dbReference type="EC" id="1.14.12.19"/>
    </reaction>
</comment>
<comment type="catalytic activity">
    <reaction evidence="1">
        <text>(E)-cinnamate + NADH + O2 + H(+) = (2E)-3-(cis-5,6-dihydroxycyclohexa-1,3-dien-1-yl)prop-2-enoate + NAD(+)</text>
        <dbReference type="Rhea" id="RHEA:25058"/>
        <dbReference type="ChEBI" id="CHEBI:15378"/>
        <dbReference type="ChEBI" id="CHEBI:15379"/>
        <dbReference type="ChEBI" id="CHEBI:15669"/>
        <dbReference type="ChEBI" id="CHEBI:57540"/>
        <dbReference type="ChEBI" id="CHEBI:57945"/>
        <dbReference type="ChEBI" id="CHEBI:61451"/>
        <dbReference type="EC" id="1.14.12.19"/>
    </reaction>
</comment>
<comment type="pathway">
    <text evidence="1">Aromatic compound metabolism; 3-phenylpropanoate degradation.</text>
</comment>
<comment type="subunit">
    <text evidence="1">This dioxygenase system consists of four proteins: the two subunits of the hydroxylase component (HcaE and HcaF), a ferredoxin (HcaC) and a ferredoxin reductase (HcaD).</text>
</comment>
<comment type="similarity">
    <text evidence="1">Belongs to the bacterial ring-hydroxylating dioxygenase beta subunit family.</text>
</comment>
<organism>
    <name type="scientific">Shigella flexneri</name>
    <dbReference type="NCBI Taxonomy" id="623"/>
    <lineage>
        <taxon>Bacteria</taxon>
        <taxon>Pseudomonadati</taxon>
        <taxon>Pseudomonadota</taxon>
        <taxon>Gammaproteobacteria</taxon>
        <taxon>Enterobacterales</taxon>
        <taxon>Enterobacteriaceae</taxon>
        <taxon>Shigella</taxon>
    </lineage>
</organism>
<keyword id="KW-0058">Aromatic hydrocarbons catabolism</keyword>
<keyword id="KW-0223">Dioxygenase</keyword>
<keyword id="KW-0520">NAD</keyword>
<keyword id="KW-0560">Oxidoreductase</keyword>
<keyword id="KW-1185">Reference proteome</keyword>
<feature type="chain" id="PRO_0000333715" description="3-phenylpropionate/cinnamic acid dioxygenase subunit beta">
    <location>
        <begin position="1"/>
        <end position="172"/>
    </location>
</feature>
<accession>Q83K38</accession>
<accession>Q7C0G3</accession>
<protein>
    <recommendedName>
        <fullName evidence="1">3-phenylpropionate/cinnamic acid dioxygenase subunit beta</fullName>
        <ecNumber evidence="1">1.14.12.19</ecNumber>
    </recommendedName>
</protein>
<reference key="1">
    <citation type="journal article" date="2002" name="Nucleic Acids Res.">
        <title>Genome sequence of Shigella flexneri 2a: insights into pathogenicity through comparison with genomes of Escherichia coli K12 and O157.</title>
        <authorList>
            <person name="Jin Q."/>
            <person name="Yuan Z."/>
            <person name="Xu J."/>
            <person name="Wang Y."/>
            <person name="Shen Y."/>
            <person name="Lu W."/>
            <person name="Wang J."/>
            <person name="Liu H."/>
            <person name="Yang J."/>
            <person name="Yang F."/>
            <person name="Zhang X."/>
            <person name="Zhang J."/>
            <person name="Yang G."/>
            <person name="Wu H."/>
            <person name="Qu D."/>
            <person name="Dong J."/>
            <person name="Sun L."/>
            <person name="Xue Y."/>
            <person name="Zhao A."/>
            <person name="Gao Y."/>
            <person name="Zhu J."/>
            <person name="Kan B."/>
            <person name="Ding K."/>
            <person name="Chen S."/>
            <person name="Cheng H."/>
            <person name="Yao Z."/>
            <person name="He B."/>
            <person name="Chen R."/>
            <person name="Ma D."/>
            <person name="Qiang B."/>
            <person name="Wen Y."/>
            <person name="Hou Y."/>
            <person name="Yu J."/>
        </authorList>
    </citation>
    <scope>NUCLEOTIDE SEQUENCE [LARGE SCALE GENOMIC DNA]</scope>
    <source>
        <strain>301 / Serotype 2a</strain>
    </source>
</reference>
<reference key="2">
    <citation type="journal article" date="2003" name="Infect. Immun.">
        <title>Complete genome sequence and comparative genomics of Shigella flexneri serotype 2a strain 2457T.</title>
        <authorList>
            <person name="Wei J."/>
            <person name="Goldberg M.B."/>
            <person name="Burland V."/>
            <person name="Venkatesan M.M."/>
            <person name="Deng W."/>
            <person name="Fournier G."/>
            <person name="Mayhew G.F."/>
            <person name="Plunkett G. III"/>
            <person name="Rose D.J."/>
            <person name="Darling A."/>
            <person name="Mau B."/>
            <person name="Perna N.T."/>
            <person name="Payne S.M."/>
            <person name="Runyen-Janecky L.J."/>
            <person name="Zhou S."/>
            <person name="Schwartz D.C."/>
            <person name="Blattner F.R."/>
        </authorList>
    </citation>
    <scope>NUCLEOTIDE SEQUENCE [LARGE SCALE GENOMIC DNA]</scope>
    <source>
        <strain>ATCC 700930 / 2457T / Serotype 2a</strain>
    </source>
</reference>
<gene>
    <name evidence="1" type="primary">hcaF</name>
    <name type="ordered locus">SF2586</name>
    <name type="ordered locus">S2758</name>
</gene>
<name>HCAF_SHIFL</name>
<sequence>MSAQVSLELHHRISQFLFHEASLLDDWKFRDWLAQLDEEIRYTMRTTVNAQTRDRRKGVQPPTTWIFNDTKDQLERRIARLETGMAWAEEPPSRTRHLISNCQVSETDIPNVFAVRVNYLLYRAQKERDETFYVGTRFDKVRRLEDDNWRLLERDIVLDQAVITSHNLSVLF</sequence>
<dbReference type="EC" id="1.14.12.19" evidence="1"/>
<dbReference type="EMBL" id="AE005674">
    <property type="protein sequence ID" value="AAN44085.1"/>
    <property type="molecule type" value="Genomic_DNA"/>
</dbReference>
<dbReference type="EMBL" id="AE014073">
    <property type="protein sequence ID" value="AAP17910.1"/>
    <property type="molecule type" value="Genomic_DNA"/>
</dbReference>
<dbReference type="RefSeq" id="WP_001276076.1">
    <property type="nucleotide sequence ID" value="NZ_WPGW01000021.1"/>
</dbReference>
<dbReference type="SMR" id="Q83K38"/>
<dbReference type="STRING" id="198214.SF2586"/>
<dbReference type="PaxDb" id="198214-SF2586"/>
<dbReference type="KEGG" id="sfl:SF2586"/>
<dbReference type="KEGG" id="sfx:S2758"/>
<dbReference type="PATRIC" id="fig|198214.7.peg.3086"/>
<dbReference type="HOGENOM" id="CLU_102527_1_1_6"/>
<dbReference type="UniPathway" id="UPA00714"/>
<dbReference type="Proteomes" id="UP000001006">
    <property type="component" value="Chromosome"/>
</dbReference>
<dbReference type="Proteomes" id="UP000002673">
    <property type="component" value="Chromosome"/>
</dbReference>
<dbReference type="GO" id="GO:0008695">
    <property type="term" value="F:3-phenylpropionate dioxygenase activity"/>
    <property type="evidence" value="ECO:0007669"/>
    <property type="project" value="UniProtKB-UniRule"/>
</dbReference>
<dbReference type="GO" id="GO:0019380">
    <property type="term" value="P:3-phenylpropionate catabolic process"/>
    <property type="evidence" value="ECO:0007669"/>
    <property type="project" value="UniProtKB-UniRule"/>
</dbReference>
<dbReference type="CDD" id="cd00667">
    <property type="entry name" value="ring_hydroxylating_dioxygenases_beta"/>
    <property type="match status" value="1"/>
</dbReference>
<dbReference type="FunFam" id="3.10.450.50:FF:000008">
    <property type="entry name" value="3-phenylpropionate/cinnamic acid dioxygenase subunit beta"/>
    <property type="match status" value="1"/>
</dbReference>
<dbReference type="Gene3D" id="3.10.450.50">
    <property type="match status" value="1"/>
</dbReference>
<dbReference type="HAMAP" id="MF_01649">
    <property type="entry name" value="HcaF"/>
    <property type="match status" value="1"/>
</dbReference>
<dbReference type="InterPro" id="IPR054881">
    <property type="entry name" value="3PPDioc_HcaF"/>
</dbReference>
<dbReference type="InterPro" id="IPR023712">
    <property type="entry name" value="HcaF"/>
</dbReference>
<dbReference type="InterPro" id="IPR032710">
    <property type="entry name" value="NTF2-like_dom_sf"/>
</dbReference>
<dbReference type="InterPro" id="IPR000391">
    <property type="entry name" value="Rng_hydr_dOase-bsu"/>
</dbReference>
<dbReference type="NCBIfam" id="NF042947">
    <property type="entry name" value="3PPDioc_HcaF"/>
    <property type="match status" value="1"/>
</dbReference>
<dbReference type="NCBIfam" id="NF007479">
    <property type="entry name" value="PRK10069.1"/>
    <property type="match status" value="1"/>
</dbReference>
<dbReference type="PANTHER" id="PTHR41534:SF2">
    <property type="entry name" value="3-PHENYLPROPIONATE_CINNAMIC ACID DIOXYGENASE SUBUNIT BETA"/>
    <property type="match status" value="1"/>
</dbReference>
<dbReference type="PANTHER" id="PTHR41534">
    <property type="entry name" value="BLR3401 PROTEIN"/>
    <property type="match status" value="1"/>
</dbReference>
<dbReference type="Pfam" id="PF00866">
    <property type="entry name" value="Ring_hydroxyl_B"/>
    <property type="match status" value="1"/>
</dbReference>
<dbReference type="SUPFAM" id="SSF54427">
    <property type="entry name" value="NTF2-like"/>
    <property type="match status" value="1"/>
</dbReference>
<evidence type="ECO:0000255" key="1">
    <source>
        <dbReference type="HAMAP-Rule" id="MF_01649"/>
    </source>
</evidence>
<proteinExistence type="inferred from homology"/>